<reference key="1">
    <citation type="journal article" date="2008" name="Environ. Microbiol.">
        <title>The genome of Erwinia tasmaniensis strain Et1/99, a non-pathogenic bacterium in the genus Erwinia.</title>
        <authorList>
            <person name="Kube M."/>
            <person name="Migdoll A.M."/>
            <person name="Mueller I."/>
            <person name="Kuhl H."/>
            <person name="Beck A."/>
            <person name="Reinhardt R."/>
            <person name="Geider K."/>
        </authorList>
    </citation>
    <scope>NUCLEOTIDE SEQUENCE [LARGE SCALE GENOMIC DNA]</scope>
    <source>
        <strain>DSM 17950 / CFBP 7177 / CIP 109463 / NCPPB 4357 / Et1/99</strain>
    </source>
</reference>
<organism>
    <name type="scientific">Erwinia tasmaniensis (strain DSM 17950 / CFBP 7177 / CIP 109463 / NCPPB 4357 / Et1/99)</name>
    <dbReference type="NCBI Taxonomy" id="465817"/>
    <lineage>
        <taxon>Bacteria</taxon>
        <taxon>Pseudomonadati</taxon>
        <taxon>Pseudomonadota</taxon>
        <taxon>Gammaproteobacteria</taxon>
        <taxon>Enterobacterales</taxon>
        <taxon>Erwiniaceae</taxon>
        <taxon>Erwinia</taxon>
    </lineage>
</organism>
<name>ATPG_ERWT9</name>
<proteinExistence type="inferred from homology"/>
<protein>
    <recommendedName>
        <fullName evidence="1">ATP synthase gamma chain</fullName>
    </recommendedName>
    <alternativeName>
        <fullName evidence="1">ATP synthase F1 sector gamma subunit</fullName>
    </alternativeName>
    <alternativeName>
        <fullName evidence="1">F-ATPase gamma subunit</fullName>
    </alternativeName>
</protein>
<feature type="chain" id="PRO_1000134151" description="ATP synthase gamma chain">
    <location>
        <begin position="1"/>
        <end position="289"/>
    </location>
</feature>
<dbReference type="EMBL" id="CU468135">
    <property type="protein sequence ID" value="CAO98522.1"/>
    <property type="molecule type" value="Genomic_DNA"/>
</dbReference>
<dbReference type="RefSeq" id="WP_012443142.1">
    <property type="nucleotide sequence ID" value="NC_010694.1"/>
</dbReference>
<dbReference type="SMR" id="B2VCA5"/>
<dbReference type="STRING" id="465817.ETA_34760"/>
<dbReference type="KEGG" id="eta:ETA_34760"/>
<dbReference type="eggNOG" id="COG0224">
    <property type="taxonomic scope" value="Bacteria"/>
</dbReference>
<dbReference type="HOGENOM" id="CLU_050669_0_1_6"/>
<dbReference type="OrthoDB" id="9812769at2"/>
<dbReference type="Proteomes" id="UP000001726">
    <property type="component" value="Chromosome"/>
</dbReference>
<dbReference type="GO" id="GO:0005886">
    <property type="term" value="C:plasma membrane"/>
    <property type="evidence" value="ECO:0007669"/>
    <property type="project" value="UniProtKB-SubCell"/>
</dbReference>
<dbReference type="GO" id="GO:0045259">
    <property type="term" value="C:proton-transporting ATP synthase complex"/>
    <property type="evidence" value="ECO:0007669"/>
    <property type="project" value="UniProtKB-KW"/>
</dbReference>
<dbReference type="GO" id="GO:0005524">
    <property type="term" value="F:ATP binding"/>
    <property type="evidence" value="ECO:0007669"/>
    <property type="project" value="UniProtKB-UniRule"/>
</dbReference>
<dbReference type="GO" id="GO:0046933">
    <property type="term" value="F:proton-transporting ATP synthase activity, rotational mechanism"/>
    <property type="evidence" value="ECO:0007669"/>
    <property type="project" value="UniProtKB-UniRule"/>
</dbReference>
<dbReference type="GO" id="GO:0042777">
    <property type="term" value="P:proton motive force-driven plasma membrane ATP synthesis"/>
    <property type="evidence" value="ECO:0007669"/>
    <property type="project" value="UniProtKB-UniRule"/>
</dbReference>
<dbReference type="CDD" id="cd12151">
    <property type="entry name" value="F1-ATPase_gamma"/>
    <property type="match status" value="1"/>
</dbReference>
<dbReference type="FunFam" id="1.10.287.80:FF:000005">
    <property type="entry name" value="ATP synthase gamma chain"/>
    <property type="match status" value="2"/>
</dbReference>
<dbReference type="FunFam" id="3.40.1380.10:FF:000001">
    <property type="entry name" value="ATP synthase gamma chain"/>
    <property type="match status" value="1"/>
</dbReference>
<dbReference type="Gene3D" id="3.40.1380.10">
    <property type="match status" value="1"/>
</dbReference>
<dbReference type="Gene3D" id="1.10.287.80">
    <property type="entry name" value="ATP synthase, gamma subunit, helix hairpin domain"/>
    <property type="match status" value="1"/>
</dbReference>
<dbReference type="HAMAP" id="MF_00815">
    <property type="entry name" value="ATP_synth_gamma_bact"/>
    <property type="match status" value="1"/>
</dbReference>
<dbReference type="InterPro" id="IPR035968">
    <property type="entry name" value="ATP_synth_F1_ATPase_gsu"/>
</dbReference>
<dbReference type="InterPro" id="IPR000131">
    <property type="entry name" value="ATP_synth_F1_gsu"/>
</dbReference>
<dbReference type="InterPro" id="IPR023632">
    <property type="entry name" value="ATP_synth_F1_gsu_CS"/>
</dbReference>
<dbReference type="NCBIfam" id="TIGR01146">
    <property type="entry name" value="ATPsyn_F1gamma"/>
    <property type="match status" value="1"/>
</dbReference>
<dbReference type="NCBIfam" id="NF004144">
    <property type="entry name" value="PRK05621.1-1"/>
    <property type="match status" value="1"/>
</dbReference>
<dbReference type="PANTHER" id="PTHR11693">
    <property type="entry name" value="ATP SYNTHASE GAMMA CHAIN"/>
    <property type="match status" value="1"/>
</dbReference>
<dbReference type="PANTHER" id="PTHR11693:SF22">
    <property type="entry name" value="ATP SYNTHASE SUBUNIT GAMMA, MITOCHONDRIAL"/>
    <property type="match status" value="1"/>
</dbReference>
<dbReference type="Pfam" id="PF00231">
    <property type="entry name" value="ATP-synt"/>
    <property type="match status" value="1"/>
</dbReference>
<dbReference type="PRINTS" id="PR00126">
    <property type="entry name" value="ATPASEGAMMA"/>
</dbReference>
<dbReference type="SUPFAM" id="SSF52943">
    <property type="entry name" value="ATP synthase (F1-ATPase), gamma subunit"/>
    <property type="match status" value="1"/>
</dbReference>
<dbReference type="PROSITE" id="PS00153">
    <property type="entry name" value="ATPASE_GAMMA"/>
    <property type="match status" value="1"/>
</dbReference>
<comment type="function">
    <text evidence="1">Produces ATP from ADP in the presence of a proton gradient across the membrane. The gamma chain is believed to be important in regulating ATPase activity and the flow of protons through the CF(0) complex.</text>
</comment>
<comment type="subunit">
    <text evidence="1">F-type ATPases have 2 components, CF(1) - the catalytic core - and CF(0) - the membrane proton channel. CF(1) has five subunits: alpha(3), beta(3), gamma(1), delta(1), epsilon(1). CF(0) has three main subunits: a, b and c.</text>
</comment>
<comment type="subcellular location">
    <subcellularLocation>
        <location evidence="1">Cell inner membrane</location>
        <topology evidence="1">Peripheral membrane protein</topology>
    </subcellularLocation>
</comment>
<comment type="similarity">
    <text evidence="1">Belongs to the ATPase gamma chain family.</text>
</comment>
<evidence type="ECO:0000255" key="1">
    <source>
        <dbReference type="HAMAP-Rule" id="MF_00815"/>
    </source>
</evidence>
<keyword id="KW-0066">ATP synthesis</keyword>
<keyword id="KW-0997">Cell inner membrane</keyword>
<keyword id="KW-1003">Cell membrane</keyword>
<keyword id="KW-0139">CF(1)</keyword>
<keyword id="KW-0375">Hydrogen ion transport</keyword>
<keyword id="KW-0406">Ion transport</keyword>
<keyword id="KW-0472">Membrane</keyword>
<keyword id="KW-1185">Reference proteome</keyword>
<keyword id="KW-0813">Transport</keyword>
<accession>B2VCA5</accession>
<gene>
    <name evidence="1" type="primary">atpG</name>
    <name type="ordered locus">ETA_34760</name>
</gene>
<sequence>MAGAKEIRSKIGSVQNTQKITKAMEMVAASKMRKSQERMAASRPYAETMRKVIGHIALGNLEYKHPYLDERDVKRVGYLVVSTDRGLCGGLNINLFKRVLADMKAWADKGVESDLAIIGSKGLSFFSSVGGNVVAQASGMGDKPALSDLIGPVKVMLQAYDEGRIDKLYIVSNKFINTMSQSPQIVQLLPLPPADDAEGVVKKSTWDYLYEPDPKALLDTLLRRYVESQVYQGVVENLASEQAARMVAMKAATDNGGNLIKELQLVYNKARQASITQELTEIVSGASAV</sequence>